<geneLocation type="chloroplast"/>
<gene>
    <name evidence="1" type="primary">rpoC1</name>
</gene>
<organism>
    <name type="scientific">Cryptomeria japonica</name>
    <name type="common">Japanese cedar</name>
    <name type="synonym">Cupressus japonica</name>
    <dbReference type="NCBI Taxonomy" id="3369"/>
    <lineage>
        <taxon>Eukaryota</taxon>
        <taxon>Viridiplantae</taxon>
        <taxon>Streptophyta</taxon>
        <taxon>Embryophyta</taxon>
        <taxon>Tracheophyta</taxon>
        <taxon>Spermatophyta</taxon>
        <taxon>Pinopsida</taxon>
        <taxon>Pinidae</taxon>
        <taxon>Conifers II</taxon>
        <taxon>Cupressales</taxon>
        <taxon>Cupressaceae</taxon>
        <taxon>Cryptomeria</taxon>
    </lineage>
</organism>
<keyword id="KW-0150">Chloroplast</keyword>
<keyword id="KW-0240">DNA-directed RNA polymerase</keyword>
<keyword id="KW-0460">Magnesium</keyword>
<keyword id="KW-0479">Metal-binding</keyword>
<keyword id="KW-0548">Nucleotidyltransferase</keyword>
<keyword id="KW-0934">Plastid</keyword>
<keyword id="KW-0804">Transcription</keyword>
<keyword id="KW-0808">Transferase</keyword>
<keyword id="KW-0862">Zinc</keyword>
<evidence type="ECO:0000255" key="1">
    <source>
        <dbReference type="HAMAP-Rule" id="MF_01323"/>
    </source>
</evidence>
<dbReference type="EC" id="2.7.7.6" evidence="1"/>
<dbReference type="EMBL" id="AP009377">
    <property type="protein sequence ID" value="BAG16685.1"/>
    <property type="molecule type" value="Genomic_DNA"/>
</dbReference>
<dbReference type="RefSeq" id="YP_001806687.1">
    <property type="nucleotide sequence ID" value="NC_010548.1"/>
</dbReference>
<dbReference type="SMR" id="B1VKH4"/>
<dbReference type="GeneID" id="6166620"/>
<dbReference type="KEGG" id="cjf:6166620"/>
<dbReference type="OrthoDB" id="1862828at2759"/>
<dbReference type="GO" id="GO:0009507">
    <property type="term" value="C:chloroplast"/>
    <property type="evidence" value="ECO:0007669"/>
    <property type="project" value="UniProtKB-SubCell"/>
</dbReference>
<dbReference type="GO" id="GO:0000428">
    <property type="term" value="C:DNA-directed RNA polymerase complex"/>
    <property type="evidence" value="ECO:0007669"/>
    <property type="project" value="UniProtKB-KW"/>
</dbReference>
<dbReference type="GO" id="GO:0005739">
    <property type="term" value="C:mitochondrion"/>
    <property type="evidence" value="ECO:0007669"/>
    <property type="project" value="GOC"/>
</dbReference>
<dbReference type="GO" id="GO:0003677">
    <property type="term" value="F:DNA binding"/>
    <property type="evidence" value="ECO:0007669"/>
    <property type="project" value="UniProtKB-UniRule"/>
</dbReference>
<dbReference type="GO" id="GO:0003899">
    <property type="term" value="F:DNA-directed RNA polymerase activity"/>
    <property type="evidence" value="ECO:0007669"/>
    <property type="project" value="UniProtKB-UniRule"/>
</dbReference>
<dbReference type="GO" id="GO:0000287">
    <property type="term" value="F:magnesium ion binding"/>
    <property type="evidence" value="ECO:0007669"/>
    <property type="project" value="UniProtKB-UniRule"/>
</dbReference>
<dbReference type="GO" id="GO:0008270">
    <property type="term" value="F:zinc ion binding"/>
    <property type="evidence" value="ECO:0007669"/>
    <property type="project" value="UniProtKB-UniRule"/>
</dbReference>
<dbReference type="GO" id="GO:0006351">
    <property type="term" value="P:DNA-templated transcription"/>
    <property type="evidence" value="ECO:0007669"/>
    <property type="project" value="UniProtKB-UniRule"/>
</dbReference>
<dbReference type="Gene3D" id="1.10.40.90">
    <property type="match status" value="1"/>
</dbReference>
<dbReference type="Gene3D" id="2.40.40.20">
    <property type="match status" value="1"/>
</dbReference>
<dbReference type="Gene3D" id="4.10.860.120">
    <property type="entry name" value="RNA polymerase II, clamp domain"/>
    <property type="match status" value="1"/>
</dbReference>
<dbReference type="Gene3D" id="1.10.274.100">
    <property type="entry name" value="RNA polymerase Rpb1, domain 3"/>
    <property type="match status" value="1"/>
</dbReference>
<dbReference type="HAMAP" id="MF_01323">
    <property type="entry name" value="RNApol_bact_RpoC1"/>
    <property type="match status" value="1"/>
</dbReference>
<dbReference type="InterPro" id="IPR045867">
    <property type="entry name" value="DNA-dir_RpoC_beta_prime"/>
</dbReference>
<dbReference type="InterPro" id="IPR000722">
    <property type="entry name" value="RNA_pol_asu"/>
</dbReference>
<dbReference type="InterPro" id="IPR006592">
    <property type="entry name" value="RNA_pol_N"/>
</dbReference>
<dbReference type="InterPro" id="IPR007080">
    <property type="entry name" value="RNA_pol_Rpb1_1"/>
</dbReference>
<dbReference type="InterPro" id="IPR007066">
    <property type="entry name" value="RNA_pol_Rpb1_3"/>
</dbReference>
<dbReference type="InterPro" id="IPR042102">
    <property type="entry name" value="RNA_pol_Rpb1_3_sf"/>
</dbReference>
<dbReference type="InterPro" id="IPR044893">
    <property type="entry name" value="RNA_pol_Rpb1_clamp_domain"/>
</dbReference>
<dbReference type="InterPro" id="IPR034678">
    <property type="entry name" value="RNApol_RpoC1"/>
</dbReference>
<dbReference type="PANTHER" id="PTHR19376">
    <property type="entry name" value="DNA-DIRECTED RNA POLYMERASE"/>
    <property type="match status" value="1"/>
</dbReference>
<dbReference type="PANTHER" id="PTHR19376:SF68">
    <property type="entry name" value="DNA-DIRECTED RNA POLYMERASE SUBUNIT BETA"/>
    <property type="match status" value="1"/>
</dbReference>
<dbReference type="Pfam" id="PF04997">
    <property type="entry name" value="RNA_pol_Rpb1_1"/>
    <property type="match status" value="1"/>
</dbReference>
<dbReference type="Pfam" id="PF00623">
    <property type="entry name" value="RNA_pol_Rpb1_2"/>
    <property type="match status" value="2"/>
</dbReference>
<dbReference type="Pfam" id="PF04983">
    <property type="entry name" value="RNA_pol_Rpb1_3"/>
    <property type="match status" value="1"/>
</dbReference>
<dbReference type="SMART" id="SM00663">
    <property type="entry name" value="RPOLA_N"/>
    <property type="match status" value="1"/>
</dbReference>
<dbReference type="SUPFAM" id="SSF64484">
    <property type="entry name" value="beta and beta-prime subunits of DNA dependent RNA-polymerase"/>
    <property type="match status" value="1"/>
</dbReference>
<name>RPOC1_CRYJA</name>
<accession>B1VKH4</accession>
<protein>
    <recommendedName>
        <fullName evidence="1">DNA-directed RNA polymerase subunit beta'</fullName>
        <ecNumber evidence="1">2.7.7.6</ecNumber>
    </recommendedName>
    <alternativeName>
        <fullName evidence="1">PEP</fullName>
    </alternativeName>
    <alternativeName>
        <fullName evidence="1">Plastid-encoded RNA polymerase subunit beta'</fullName>
        <shortName evidence="1">RNA polymerase subunit beta'</shortName>
    </alternativeName>
</protein>
<comment type="function">
    <text evidence="1">DNA-dependent RNA polymerase catalyzes the transcription of DNA into RNA using the four ribonucleoside triphosphates as substrates.</text>
</comment>
<comment type="catalytic activity">
    <reaction evidence="1">
        <text>RNA(n) + a ribonucleoside 5'-triphosphate = RNA(n+1) + diphosphate</text>
        <dbReference type="Rhea" id="RHEA:21248"/>
        <dbReference type="Rhea" id="RHEA-COMP:14527"/>
        <dbReference type="Rhea" id="RHEA-COMP:17342"/>
        <dbReference type="ChEBI" id="CHEBI:33019"/>
        <dbReference type="ChEBI" id="CHEBI:61557"/>
        <dbReference type="ChEBI" id="CHEBI:140395"/>
        <dbReference type="EC" id="2.7.7.6"/>
    </reaction>
</comment>
<comment type="cofactor">
    <cofactor evidence="1">
        <name>Mg(2+)</name>
        <dbReference type="ChEBI" id="CHEBI:18420"/>
    </cofactor>
    <text evidence="1">Binds 1 Mg(2+) ion per subunit.</text>
</comment>
<comment type="cofactor">
    <cofactor evidence="1">
        <name>Zn(2+)</name>
        <dbReference type="ChEBI" id="CHEBI:29105"/>
    </cofactor>
    <text evidence="1">Binds 1 Zn(2+) ion per subunit.</text>
</comment>
<comment type="subunit">
    <text evidence="1">In plastids the minimal PEP RNA polymerase catalytic core is composed of four subunits: alpha, beta, beta', and beta''. When a (nuclear-encoded) sigma factor is associated with the core the holoenzyme is formed, which can initiate transcription.</text>
</comment>
<comment type="subcellular location">
    <subcellularLocation>
        <location evidence="1">Plastid</location>
        <location evidence="1">Chloroplast</location>
    </subcellularLocation>
</comment>
<comment type="similarity">
    <text evidence="1">Belongs to the RNA polymerase beta' chain family. RpoC1 subfamily.</text>
</comment>
<reference key="1">
    <citation type="journal article" date="2008" name="BMC Plant Biol.">
        <title>Complete nucleotide sequence of the Cryptomeria japonica D. Don. chloroplast genome and comparative chloroplast genomics: diversified genomic structure of coniferous species.</title>
        <authorList>
            <person name="Hirao T."/>
            <person name="Watanabe A."/>
            <person name="Kurita M."/>
            <person name="Kondo T."/>
            <person name="Takata K."/>
        </authorList>
    </citation>
    <scope>NUCLEOTIDE SEQUENCE [LARGE SCALE GENOMIC DNA]</scope>
</reference>
<feature type="chain" id="PRO_0000353484" description="DNA-directed RNA polymerase subunit beta'">
    <location>
        <begin position="1"/>
        <end position="698"/>
    </location>
</feature>
<feature type="binding site" evidence="1">
    <location>
        <position position="69"/>
    </location>
    <ligand>
        <name>Zn(2+)</name>
        <dbReference type="ChEBI" id="CHEBI:29105"/>
    </ligand>
</feature>
<feature type="binding site" evidence="1">
    <location>
        <position position="71"/>
    </location>
    <ligand>
        <name>Zn(2+)</name>
        <dbReference type="ChEBI" id="CHEBI:29105"/>
    </ligand>
</feature>
<feature type="binding site" evidence="1">
    <location>
        <position position="89"/>
    </location>
    <ligand>
        <name>Zn(2+)</name>
        <dbReference type="ChEBI" id="CHEBI:29105"/>
    </ligand>
</feature>
<feature type="binding site" evidence="1">
    <location>
        <position position="92"/>
    </location>
    <ligand>
        <name>Zn(2+)</name>
        <dbReference type="ChEBI" id="CHEBI:29105"/>
    </ligand>
</feature>
<feature type="binding site" evidence="1">
    <location>
        <position position="509"/>
    </location>
    <ligand>
        <name>Mg(2+)</name>
        <dbReference type="ChEBI" id="CHEBI:18420"/>
    </ligand>
</feature>
<feature type="binding site" evidence="1">
    <location>
        <position position="511"/>
    </location>
    <ligand>
        <name>Mg(2+)</name>
        <dbReference type="ChEBI" id="CHEBI:18420"/>
    </ligand>
</feature>
<feature type="binding site" evidence="1">
    <location>
        <position position="513"/>
    </location>
    <ligand>
        <name>Mg(2+)</name>
        <dbReference type="ChEBI" id="CHEBI:18420"/>
    </ligand>
</feature>
<proteinExistence type="inferred from homology"/>
<sequence length="698" mass="81605">MSDQDKHEQLRIGLVSPEQILAWSERILPNGERVGQVTTERTLDYRTYEPVRDGLFCERIFGPKKRGVCACVKPRMMENDKENYNSNFCTQCGVELAIDPRIRRYRMGYIKLACPVVHIWYFKRRPSYIADLLDKTRKELEDPVYCDVCITRPTAKKPTLLRFQGLRPSKYESWAEKIAYYLSWDFGLVQEREIATGGKAIREQLAGLDLQMIIDRSYIEWKEIDEVISILFSEPENLFSNRKIYAQFKEQKLQKLRRRKDLLVRRMRFAKYFLRTNVEPQWMVLCLLPVLPPDLRPMFQLNEGGVITSDLNELYQTVIRRNNNVLQFIETTSAFLIPDLLPDQKKLVQQAVDALLDNSIGTQPVRDSHDRPYKSFSDFIQGKEGRFRENLLGKRVDYSGRSVIVVGPLLSLYQCGLPREIAIELFQAFLIRDLVERQIAPNLRAAKFLIRDRGPIIWNVLKQIMQKHPILLNRAPTLHRLGIQAFIPVLINERAIRLHPLVCAGFNADFDGDQMAVHVPLSMEAQVEARLLMFSHLNLISPTIGDPICVPTQDMLLGLYRSTLQKNQGIYENRYHPNSSKKKIVSPSFYSYDDALKAYEQKQIDLDSPLWLRWGREIDTSIINSVNRELPIEVQYECLGTFYEIYDHFRIRKGRVGEILNKYIRTTVGRIRFNREIEEAIKGLWTYDIRQEMLLFRI</sequence>